<sequence>MWQVLRGWRKGWQSPRGALAWAVQGQPCPPCSRAVASVGKDEYTFVVVGAGSAGCVLASRLTEDPNHRVLLLEAGPKDLLMGSKRLQWKIHMPAALVSNLCDDKYNWYYHTEPQPGMDSRVLYWPRGRVWGGSSSLNAMVYIRGHAEDYNRWHREGAEGWDYAHCLPYFRKAQRHELGANMYRGGDGPLHVSRGKTNHPLHQAFLQAARQAGYPFTEDMNGFQQEGFGWMDMTVHQGKRWSTACAYLHPVLSRPNLRAEVQTLVSRVLFEGTRAVGVEYIKDGQRHKAYVSREVILSGGAINSPQLLMLSGVGNADDLRKLDIPVVCHLPGVGQNLQDHLEVYVQQACTQPITLHSAQKPLRKVCIGLEWLWSYTGDGATAHLETGGFIRSRPGVPHPDIQFHFLPSQVIDHGRKPTQQEAYQVHVGTMRATSVGWLKLRSANPRDHPVIHPNYLSTETDVEDFRQCVRLSREIFAQEALAPFRGKELQPGSHVQSDKEIDAFVRAKADSAYHPSCTCKMGRSSDPTAVVDAQTKVIGVENLRVVDASIMPSVVSGNLNAPTVMIAEKAADIIKGHPALEDKNVPVYKPQTLDTQR</sequence>
<keyword id="KW-0007">Acetylation</keyword>
<keyword id="KW-0274">FAD</keyword>
<keyword id="KW-0285">Flavoprotein</keyword>
<keyword id="KW-0472">Membrane</keyword>
<keyword id="KW-0496">Mitochondrion</keyword>
<keyword id="KW-0999">Mitochondrion inner membrane</keyword>
<keyword id="KW-0560">Oxidoreductase</keyword>
<keyword id="KW-1185">Reference proteome</keyword>
<keyword id="KW-0809">Transit peptide</keyword>
<feature type="transit peptide" description="Mitochondrion" evidence="1">
    <location>
        <begin position="1"/>
        <end position="34"/>
    </location>
</feature>
<feature type="chain" id="PRO_0000012330" description="Choline dehydrogenase, mitochondrial">
    <location>
        <begin position="35"/>
        <end position="596"/>
    </location>
</feature>
<feature type="active site" description="Proton acceptor" evidence="2">
    <location>
        <position position="513"/>
    </location>
</feature>
<feature type="binding site" evidence="1">
    <location>
        <begin position="44"/>
        <end position="73"/>
    </location>
    <ligand>
        <name>FAD</name>
        <dbReference type="ChEBI" id="CHEBI:57692"/>
    </ligand>
</feature>
<feature type="modified residue" description="N6-succinyllysine" evidence="6">
    <location>
        <position position="438"/>
    </location>
</feature>
<feature type="modified residue" description="N6-acetyllysine; alternate" evidence="5">
    <location>
        <position position="486"/>
    </location>
</feature>
<feature type="modified residue" description="N6-succinyllysine; alternate" evidence="6">
    <location>
        <position position="486"/>
    </location>
</feature>
<feature type="modified residue" description="N6-acetyllysine; alternate" evidence="5">
    <location>
        <position position="498"/>
    </location>
</feature>
<feature type="modified residue" description="N6-succinyllysine; alternate" evidence="6">
    <location>
        <position position="498"/>
    </location>
</feature>
<feature type="modified residue" description="N6-acetyllysine" evidence="5">
    <location>
        <position position="582"/>
    </location>
</feature>
<feature type="sequence conflict" description="In Ref. 2; AAH39186." evidence="4" ref="2">
    <original>V</original>
    <variation>A</variation>
    <location>
        <position position="4"/>
    </location>
</feature>
<feature type="sequence conflict" description="In Ref. 2; AAH39186." evidence="4" ref="2">
    <original>W</original>
    <variation>C</variation>
    <location>
        <position position="12"/>
    </location>
</feature>
<feature type="sequence conflict" description="In Ref. 2; AAH39186." evidence="4" ref="2">
    <original>Q</original>
    <variation>R</variation>
    <location>
        <position position="24"/>
    </location>
</feature>
<feature type="sequence conflict" description="In Ref. 1; BAE37601." evidence="4" ref="1">
    <original>G</original>
    <variation>A</variation>
    <location>
        <position position="212"/>
    </location>
</feature>
<organism>
    <name type="scientific">Mus musculus</name>
    <name type="common">Mouse</name>
    <dbReference type="NCBI Taxonomy" id="10090"/>
    <lineage>
        <taxon>Eukaryota</taxon>
        <taxon>Metazoa</taxon>
        <taxon>Chordata</taxon>
        <taxon>Craniata</taxon>
        <taxon>Vertebrata</taxon>
        <taxon>Euteleostomi</taxon>
        <taxon>Mammalia</taxon>
        <taxon>Eutheria</taxon>
        <taxon>Euarchontoglires</taxon>
        <taxon>Glires</taxon>
        <taxon>Rodentia</taxon>
        <taxon>Myomorpha</taxon>
        <taxon>Muroidea</taxon>
        <taxon>Muridae</taxon>
        <taxon>Murinae</taxon>
        <taxon>Mus</taxon>
        <taxon>Mus</taxon>
    </lineage>
</organism>
<name>CHDH_MOUSE</name>
<evidence type="ECO:0000250" key="1"/>
<evidence type="ECO:0000250" key="2">
    <source>
        <dbReference type="UniProtKB" id="E4QP00"/>
    </source>
</evidence>
<evidence type="ECO:0000269" key="3">
    <source>
    </source>
</evidence>
<evidence type="ECO:0000305" key="4"/>
<evidence type="ECO:0007744" key="5">
    <source>
    </source>
</evidence>
<evidence type="ECO:0007744" key="6">
    <source>
    </source>
</evidence>
<gene>
    <name type="primary">Chdh</name>
</gene>
<protein>
    <recommendedName>
        <fullName>Choline dehydrogenase, mitochondrial</fullName>
        <shortName>CDH</shortName>
        <shortName>CHD</shortName>
        <ecNumber>1.1.99.1</ecNumber>
    </recommendedName>
</protein>
<comment type="catalytic activity">
    <reaction>
        <text>choline + A = betaine aldehyde + AH2</text>
        <dbReference type="Rhea" id="RHEA:17433"/>
        <dbReference type="ChEBI" id="CHEBI:13193"/>
        <dbReference type="ChEBI" id="CHEBI:15354"/>
        <dbReference type="ChEBI" id="CHEBI:15710"/>
        <dbReference type="ChEBI" id="CHEBI:17499"/>
        <dbReference type="EC" id="1.1.99.1"/>
    </reaction>
</comment>
<comment type="cofactor">
    <cofactor evidence="1">
        <name>FAD</name>
        <dbReference type="ChEBI" id="CHEBI:57692"/>
    </cofactor>
</comment>
<comment type="pathway">
    <text>Amine and polyamine biosynthesis; betaine biosynthesis via choline pathway; betaine aldehyde from choline (cytochrome c reductase route): step 1/1.</text>
</comment>
<comment type="subcellular location">
    <subcellularLocation>
        <location evidence="3">Mitochondrion inner membrane</location>
    </subcellularLocation>
</comment>
<comment type="PTM">
    <text>Acetylation of Lys-498 is observed in liver mitochondria from fasted mice but not from fed mice.</text>
</comment>
<comment type="disruption phenotype">
    <text evidence="3">Decreased testicular betaine and increased choline and phosphatidylcholine concentrations. Only one of eleven males was able to reproduce, impaired fertility was due to diminished sperm motility.</text>
</comment>
<comment type="similarity">
    <text evidence="4">Belongs to the GMC oxidoreductase family.</text>
</comment>
<accession>Q8BJ64</accession>
<accession>Q3TPY4</accession>
<accession>Q8CHT7</accession>
<dbReference type="EC" id="1.1.99.1"/>
<dbReference type="EMBL" id="AK030900">
    <property type="protein sequence ID" value="BAC27176.1"/>
    <property type="molecule type" value="mRNA"/>
</dbReference>
<dbReference type="EMBL" id="AK164042">
    <property type="protein sequence ID" value="BAE37601.1"/>
    <property type="molecule type" value="mRNA"/>
</dbReference>
<dbReference type="EMBL" id="BC039186">
    <property type="protein sequence ID" value="AAH39186.1"/>
    <property type="molecule type" value="mRNA"/>
</dbReference>
<dbReference type="CCDS" id="CCDS26892.1"/>
<dbReference type="RefSeq" id="NP_001129712.1">
    <property type="nucleotide sequence ID" value="NM_001136240.1"/>
</dbReference>
<dbReference type="RefSeq" id="NP_758468.2">
    <property type="nucleotide sequence ID" value="NM_172264.2"/>
</dbReference>
<dbReference type="RefSeq" id="NP_780552.1">
    <property type="nucleotide sequence ID" value="NM_175343.5"/>
</dbReference>
<dbReference type="SMR" id="Q8BJ64"/>
<dbReference type="FunCoup" id="Q8BJ64">
    <property type="interactions" value="825"/>
</dbReference>
<dbReference type="STRING" id="10090.ENSMUSP00000065542"/>
<dbReference type="GlyGen" id="Q8BJ64">
    <property type="glycosylation" value="1 site, 1 O-linked glycan (1 site)"/>
</dbReference>
<dbReference type="iPTMnet" id="Q8BJ64"/>
<dbReference type="PhosphoSitePlus" id="Q8BJ64"/>
<dbReference type="SwissPalm" id="Q8BJ64"/>
<dbReference type="jPOST" id="Q8BJ64"/>
<dbReference type="PaxDb" id="10090-ENSMUSP00000065542"/>
<dbReference type="PeptideAtlas" id="Q8BJ64"/>
<dbReference type="ProteomicsDB" id="281611"/>
<dbReference type="Antibodypedia" id="31431">
    <property type="antibodies" value="139 antibodies from 23 providers"/>
</dbReference>
<dbReference type="DNASU" id="218865"/>
<dbReference type="Ensembl" id="ENSMUST00000067620.12">
    <property type="protein sequence ID" value="ENSMUSP00000065542.5"/>
    <property type="gene ID" value="ENSMUSG00000015970.20"/>
</dbReference>
<dbReference type="Ensembl" id="ENSMUST00000118917.2">
    <property type="protein sequence ID" value="ENSMUSP00000112916.2"/>
    <property type="gene ID" value="ENSMUSG00000015970.20"/>
</dbReference>
<dbReference type="GeneID" id="218865"/>
<dbReference type="KEGG" id="mmu:218865"/>
<dbReference type="UCSC" id="uc007sup.2">
    <property type="organism name" value="mouse"/>
</dbReference>
<dbReference type="AGR" id="MGI:1860776"/>
<dbReference type="CTD" id="55349"/>
<dbReference type="MGI" id="MGI:1860776">
    <property type="gene designation" value="Chdh"/>
</dbReference>
<dbReference type="VEuPathDB" id="HostDB:ENSMUSG00000015970"/>
<dbReference type="eggNOG" id="KOG1238">
    <property type="taxonomic scope" value="Eukaryota"/>
</dbReference>
<dbReference type="GeneTree" id="ENSGT00530000063260"/>
<dbReference type="HOGENOM" id="CLU_002865_7_1_1"/>
<dbReference type="InParanoid" id="Q8BJ64"/>
<dbReference type="OMA" id="NHFESCA"/>
<dbReference type="OrthoDB" id="269227at2759"/>
<dbReference type="PhylomeDB" id="Q8BJ64"/>
<dbReference type="TreeFam" id="TF313911"/>
<dbReference type="BRENDA" id="1.1.99.1">
    <property type="organism ID" value="3474"/>
</dbReference>
<dbReference type="Reactome" id="R-MMU-6798163">
    <property type="pathway name" value="Choline catabolism"/>
</dbReference>
<dbReference type="UniPathway" id="UPA00529">
    <property type="reaction ID" value="UER00385"/>
</dbReference>
<dbReference type="BioGRID-ORCS" id="218865">
    <property type="hits" value="3 hits in 78 CRISPR screens"/>
</dbReference>
<dbReference type="ChiTaRS" id="Chdh">
    <property type="organism name" value="mouse"/>
</dbReference>
<dbReference type="PRO" id="PR:Q8BJ64"/>
<dbReference type="Proteomes" id="UP000000589">
    <property type="component" value="Chromosome 14"/>
</dbReference>
<dbReference type="RNAct" id="Q8BJ64">
    <property type="molecule type" value="protein"/>
</dbReference>
<dbReference type="Bgee" id="ENSMUSG00000015970">
    <property type="expression patterns" value="Expressed in vestibular membrane of cochlear duct and 203 other cell types or tissues"/>
</dbReference>
<dbReference type="GO" id="GO:0005743">
    <property type="term" value="C:mitochondrial inner membrane"/>
    <property type="evidence" value="ECO:0007005"/>
    <property type="project" value="MGI"/>
</dbReference>
<dbReference type="GO" id="GO:0005739">
    <property type="term" value="C:mitochondrion"/>
    <property type="evidence" value="ECO:0007005"/>
    <property type="project" value="MGI"/>
</dbReference>
<dbReference type="GO" id="GO:0008812">
    <property type="term" value="F:choline dehydrogenase activity"/>
    <property type="evidence" value="ECO:0007669"/>
    <property type="project" value="UniProtKB-EC"/>
</dbReference>
<dbReference type="GO" id="GO:0050660">
    <property type="term" value="F:flavin adenine dinucleotide binding"/>
    <property type="evidence" value="ECO:0007669"/>
    <property type="project" value="InterPro"/>
</dbReference>
<dbReference type="GO" id="GO:0019285">
    <property type="term" value="P:glycine betaine biosynthetic process from choline"/>
    <property type="evidence" value="ECO:0007669"/>
    <property type="project" value="UniProtKB-UniPathway"/>
</dbReference>
<dbReference type="Gene3D" id="3.50.50.60">
    <property type="entry name" value="FAD/NAD(P)-binding domain"/>
    <property type="match status" value="1"/>
</dbReference>
<dbReference type="Gene3D" id="3.30.560.10">
    <property type="entry name" value="Glucose Oxidase, domain 3"/>
    <property type="match status" value="1"/>
</dbReference>
<dbReference type="InterPro" id="IPR011533">
    <property type="entry name" value="BetA"/>
</dbReference>
<dbReference type="InterPro" id="IPR036188">
    <property type="entry name" value="FAD/NAD-bd_sf"/>
</dbReference>
<dbReference type="InterPro" id="IPR012132">
    <property type="entry name" value="GMC_OxRdtase"/>
</dbReference>
<dbReference type="InterPro" id="IPR000172">
    <property type="entry name" value="GMC_OxRdtase_N"/>
</dbReference>
<dbReference type="InterPro" id="IPR007867">
    <property type="entry name" value="GMC_OxRtase_C"/>
</dbReference>
<dbReference type="NCBIfam" id="TIGR01810">
    <property type="entry name" value="betA"/>
    <property type="match status" value="1"/>
</dbReference>
<dbReference type="NCBIfam" id="NF002550">
    <property type="entry name" value="PRK02106.1"/>
    <property type="match status" value="1"/>
</dbReference>
<dbReference type="PANTHER" id="PTHR11552:SF147">
    <property type="entry name" value="CHOLINE DEHYDROGENASE, MITOCHONDRIAL"/>
    <property type="match status" value="1"/>
</dbReference>
<dbReference type="PANTHER" id="PTHR11552">
    <property type="entry name" value="GLUCOSE-METHANOL-CHOLINE GMC OXIDOREDUCTASE"/>
    <property type="match status" value="1"/>
</dbReference>
<dbReference type="Pfam" id="PF05199">
    <property type="entry name" value="GMC_oxred_C"/>
    <property type="match status" value="1"/>
</dbReference>
<dbReference type="Pfam" id="PF00732">
    <property type="entry name" value="GMC_oxred_N"/>
    <property type="match status" value="1"/>
</dbReference>
<dbReference type="PIRSF" id="PIRSF000137">
    <property type="entry name" value="Alcohol_oxidase"/>
    <property type="match status" value="1"/>
</dbReference>
<dbReference type="SUPFAM" id="SSF54373">
    <property type="entry name" value="FAD-linked reductases, C-terminal domain"/>
    <property type="match status" value="1"/>
</dbReference>
<dbReference type="SUPFAM" id="SSF51905">
    <property type="entry name" value="FAD/NAD(P)-binding domain"/>
    <property type="match status" value="1"/>
</dbReference>
<dbReference type="PROSITE" id="PS00623">
    <property type="entry name" value="GMC_OXRED_1"/>
    <property type="match status" value="1"/>
</dbReference>
<dbReference type="PROSITE" id="PS00624">
    <property type="entry name" value="GMC_OXRED_2"/>
    <property type="match status" value="1"/>
</dbReference>
<reference key="1">
    <citation type="journal article" date="2005" name="Science">
        <title>The transcriptional landscape of the mammalian genome.</title>
        <authorList>
            <person name="Carninci P."/>
            <person name="Kasukawa T."/>
            <person name="Katayama S."/>
            <person name="Gough J."/>
            <person name="Frith M.C."/>
            <person name="Maeda N."/>
            <person name="Oyama R."/>
            <person name="Ravasi T."/>
            <person name="Lenhard B."/>
            <person name="Wells C."/>
            <person name="Kodzius R."/>
            <person name="Shimokawa K."/>
            <person name="Bajic V.B."/>
            <person name="Brenner S.E."/>
            <person name="Batalov S."/>
            <person name="Forrest A.R."/>
            <person name="Zavolan M."/>
            <person name="Davis M.J."/>
            <person name="Wilming L.G."/>
            <person name="Aidinis V."/>
            <person name="Allen J.E."/>
            <person name="Ambesi-Impiombato A."/>
            <person name="Apweiler R."/>
            <person name="Aturaliya R.N."/>
            <person name="Bailey T.L."/>
            <person name="Bansal M."/>
            <person name="Baxter L."/>
            <person name="Beisel K.W."/>
            <person name="Bersano T."/>
            <person name="Bono H."/>
            <person name="Chalk A.M."/>
            <person name="Chiu K.P."/>
            <person name="Choudhary V."/>
            <person name="Christoffels A."/>
            <person name="Clutterbuck D.R."/>
            <person name="Crowe M.L."/>
            <person name="Dalla E."/>
            <person name="Dalrymple B.P."/>
            <person name="de Bono B."/>
            <person name="Della Gatta G."/>
            <person name="di Bernardo D."/>
            <person name="Down T."/>
            <person name="Engstrom P."/>
            <person name="Fagiolini M."/>
            <person name="Faulkner G."/>
            <person name="Fletcher C.F."/>
            <person name="Fukushima T."/>
            <person name="Furuno M."/>
            <person name="Futaki S."/>
            <person name="Gariboldi M."/>
            <person name="Georgii-Hemming P."/>
            <person name="Gingeras T.R."/>
            <person name="Gojobori T."/>
            <person name="Green R.E."/>
            <person name="Gustincich S."/>
            <person name="Harbers M."/>
            <person name="Hayashi Y."/>
            <person name="Hensch T.K."/>
            <person name="Hirokawa N."/>
            <person name="Hill D."/>
            <person name="Huminiecki L."/>
            <person name="Iacono M."/>
            <person name="Ikeo K."/>
            <person name="Iwama A."/>
            <person name="Ishikawa T."/>
            <person name="Jakt M."/>
            <person name="Kanapin A."/>
            <person name="Katoh M."/>
            <person name="Kawasawa Y."/>
            <person name="Kelso J."/>
            <person name="Kitamura H."/>
            <person name="Kitano H."/>
            <person name="Kollias G."/>
            <person name="Krishnan S.P."/>
            <person name="Kruger A."/>
            <person name="Kummerfeld S.K."/>
            <person name="Kurochkin I.V."/>
            <person name="Lareau L.F."/>
            <person name="Lazarevic D."/>
            <person name="Lipovich L."/>
            <person name="Liu J."/>
            <person name="Liuni S."/>
            <person name="McWilliam S."/>
            <person name="Madan Babu M."/>
            <person name="Madera M."/>
            <person name="Marchionni L."/>
            <person name="Matsuda H."/>
            <person name="Matsuzawa S."/>
            <person name="Miki H."/>
            <person name="Mignone F."/>
            <person name="Miyake S."/>
            <person name="Morris K."/>
            <person name="Mottagui-Tabar S."/>
            <person name="Mulder N."/>
            <person name="Nakano N."/>
            <person name="Nakauchi H."/>
            <person name="Ng P."/>
            <person name="Nilsson R."/>
            <person name="Nishiguchi S."/>
            <person name="Nishikawa S."/>
            <person name="Nori F."/>
            <person name="Ohara O."/>
            <person name="Okazaki Y."/>
            <person name="Orlando V."/>
            <person name="Pang K.C."/>
            <person name="Pavan W.J."/>
            <person name="Pavesi G."/>
            <person name="Pesole G."/>
            <person name="Petrovsky N."/>
            <person name="Piazza S."/>
            <person name="Reed J."/>
            <person name="Reid J.F."/>
            <person name="Ring B.Z."/>
            <person name="Ringwald M."/>
            <person name="Rost B."/>
            <person name="Ruan Y."/>
            <person name="Salzberg S.L."/>
            <person name="Sandelin A."/>
            <person name="Schneider C."/>
            <person name="Schoenbach C."/>
            <person name="Sekiguchi K."/>
            <person name="Semple C.A."/>
            <person name="Seno S."/>
            <person name="Sessa L."/>
            <person name="Sheng Y."/>
            <person name="Shibata Y."/>
            <person name="Shimada H."/>
            <person name="Shimada K."/>
            <person name="Silva D."/>
            <person name="Sinclair B."/>
            <person name="Sperling S."/>
            <person name="Stupka E."/>
            <person name="Sugiura K."/>
            <person name="Sultana R."/>
            <person name="Takenaka Y."/>
            <person name="Taki K."/>
            <person name="Tammoja K."/>
            <person name="Tan S.L."/>
            <person name="Tang S."/>
            <person name="Taylor M.S."/>
            <person name="Tegner J."/>
            <person name="Teichmann S.A."/>
            <person name="Ueda H.R."/>
            <person name="van Nimwegen E."/>
            <person name="Verardo R."/>
            <person name="Wei C.L."/>
            <person name="Yagi K."/>
            <person name="Yamanishi H."/>
            <person name="Zabarovsky E."/>
            <person name="Zhu S."/>
            <person name="Zimmer A."/>
            <person name="Hide W."/>
            <person name="Bult C."/>
            <person name="Grimmond S.M."/>
            <person name="Teasdale R.D."/>
            <person name="Liu E.T."/>
            <person name="Brusic V."/>
            <person name="Quackenbush J."/>
            <person name="Wahlestedt C."/>
            <person name="Mattick J.S."/>
            <person name="Hume D.A."/>
            <person name="Kai C."/>
            <person name="Sasaki D."/>
            <person name="Tomaru Y."/>
            <person name="Fukuda S."/>
            <person name="Kanamori-Katayama M."/>
            <person name="Suzuki M."/>
            <person name="Aoki J."/>
            <person name="Arakawa T."/>
            <person name="Iida J."/>
            <person name="Imamura K."/>
            <person name="Itoh M."/>
            <person name="Kato T."/>
            <person name="Kawaji H."/>
            <person name="Kawagashira N."/>
            <person name="Kawashima T."/>
            <person name="Kojima M."/>
            <person name="Kondo S."/>
            <person name="Konno H."/>
            <person name="Nakano K."/>
            <person name="Ninomiya N."/>
            <person name="Nishio T."/>
            <person name="Okada M."/>
            <person name="Plessy C."/>
            <person name="Shibata K."/>
            <person name="Shiraki T."/>
            <person name="Suzuki S."/>
            <person name="Tagami M."/>
            <person name="Waki K."/>
            <person name="Watahiki A."/>
            <person name="Okamura-Oho Y."/>
            <person name="Suzuki H."/>
            <person name="Kawai J."/>
            <person name="Hayashizaki Y."/>
        </authorList>
    </citation>
    <scope>NUCLEOTIDE SEQUENCE [LARGE SCALE MRNA]</scope>
    <source>
        <strain>C57BL/6J</strain>
        <tissue>Thymus</tissue>
    </source>
</reference>
<reference key="2">
    <citation type="journal article" date="2004" name="Genome Res.">
        <title>The status, quality, and expansion of the NIH full-length cDNA project: the Mammalian Gene Collection (MGC).</title>
        <authorList>
            <consortium name="The MGC Project Team"/>
        </authorList>
    </citation>
    <scope>NUCLEOTIDE SEQUENCE [LARGE SCALE MRNA]</scope>
    <source>
        <strain>FVB/N</strain>
    </source>
</reference>
<reference key="3">
    <citation type="journal article" date="2010" name="Cell">
        <title>A tissue-specific atlas of mouse protein phosphorylation and expression.</title>
        <authorList>
            <person name="Huttlin E.L."/>
            <person name="Jedrychowski M.P."/>
            <person name="Elias J.E."/>
            <person name="Goswami T."/>
            <person name="Rad R."/>
            <person name="Beausoleil S.A."/>
            <person name="Villen J."/>
            <person name="Haas W."/>
            <person name="Sowa M.E."/>
            <person name="Gygi S.P."/>
        </authorList>
    </citation>
    <scope>IDENTIFICATION BY MASS SPECTROMETRY [LARGE SCALE ANALYSIS]</scope>
    <source>
        <tissue>Brown adipose tissue</tissue>
        <tissue>Kidney</tissue>
        <tissue>Liver</tissue>
        <tissue>Pancreas</tissue>
        <tissue>Testis</tissue>
    </source>
</reference>
<reference key="4">
    <citation type="journal article" date="2010" name="FASEB J.">
        <title>Deletion of murine choline dehydrogenase results in diminished sperm motility.</title>
        <authorList>
            <person name="Johnson A.R."/>
            <person name="Craciunescu C.N."/>
            <person name="Guo Z."/>
            <person name="Teng Y.W."/>
            <person name="Thresher R.J."/>
            <person name="Blusztajn J.K."/>
            <person name="Zeisel S.H."/>
        </authorList>
    </citation>
    <scope>SUBCELLULAR LOCATION</scope>
    <scope>DISRUPTION PHENOTYPE</scope>
</reference>
<reference key="5">
    <citation type="journal article" date="2013" name="Mol. Cell">
        <title>SIRT5-mediated lysine desuccinylation impacts diverse metabolic pathways.</title>
        <authorList>
            <person name="Park J."/>
            <person name="Chen Y."/>
            <person name="Tishkoff D.X."/>
            <person name="Peng C."/>
            <person name="Tan M."/>
            <person name="Dai L."/>
            <person name="Xie Z."/>
            <person name="Zhang Y."/>
            <person name="Zwaans B.M."/>
            <person name="Skinner M.E."/>
            <person name="Lombard D.B."/>
            <person name="Zhao Y."/>
        </authorList>
    </citation>
    <scope>SUCCINYLATION [LARGE SCALE ANALYSIS] AT LYS-438; LYS-486 AND LYS-498</scope>
    <scope>IDENTIFICATION BY MASS SPECTROMETRY [LARGE SCALE ANALYSIS]</scope>
    <source>
        <tissue>Liver</tissue>
    </source>
</reference>
<reference key="6">
    <citation type="journal article" date="2013" name="Proc. Natl. Acad. Sci. U.S.A.">
        <title>Label-free quantitative proteomics of the lysine acetylome in mitochondria identifies substrates of SIRT3 in metabolic pathways.</title>
        <authorList>
            <person name="Rardin M.J."/>
            <person name="Newman J.C."/>
            <person name="Held J.M."/>
            <person name="Cusack M.P."/>
            <person name="Sorensen D.J."/>
            <person name="Li B."/>
            <person name="Schilling B."/>
            <person name="Mooney S.D."/>
            <person name="Kahn C.R."/>
            <person name="Verdin E."/>
            <person name="Gibson B.W."/>
        </authorList>
    </citation>
    <scope>ACETYLATION [LARGE SCALE ANALYSIS] AT LYS-486; LYS-498 AND LYS-582</scope>
    <scope>IDENTIFICATION BY MASS SPECTROMETRY [LARGE SCALE ANALYSIS]</scope>
    <source>
        <tissue>Liver</tissue>
    </source>
</reference>
<proteinExistence type="evidence at protein level"/>